<feature type="chain" id="PRO_0000327846" description="Serine/threonine-protein phosphatase 6 catalytic subunit">
    <location>
        <begin position="1"/>
        <end position="305"/>
    </location>
</feature>
<feature type="active site" description="Proton donor" evidence="1">
    <location>
        <position position="115"/>
    </location>
</feature>
<feature type="binding site" evidence="1">
    <location>
        <position position="54"/>
    </location>
    <ligand>
        <name>Mn(2+)</name>
        <dbReference type="ChEBI" id="CHEBI:29035"/>
        <label>1</label>
    </ligand>
</feature>
<feature type="binding site" evidence="1">
    <location>
        <position position="56"/>
    </location>
    <ligand>
        <name>Mn(2+)</name>
        <dbReference type="ChEBI" id="CHEBI:29035"/>
        <label>1</label>
    </ligand>
</feature>
<feature type="binding site" evidence="1">
    <location>
        <position position="82"/>
    </location>
    <ligand>
        <name>Mn(2+)</name>
        <dbReference type="ChEBI" id="CHEBI:29035"/>
        <label>1</label>
    </ligand>
</feature>
<feature type="binding site" evidence="1">
    <location>
        <position position="82"/>
    </location>
    <ligand>
        <name>Mn(2+)</name>
        <dbReference type="ChEBI" id="CHEBI:29035"/>
        <label>2</label>
    </ligand>
</feature>
<feature type="binding site" evidence="1">
    <location>
        <position position="114"/>
    </location>
    <ligand>
        <name>Mn(2+)</name>
        <dbReference type="ChEBI" id="CHEBI:29035"/>
        <label>2</label>
    </ligand>
</feature>
<feature type="binding site" evidence="1">
    <location>
        <position position="164"/>
    </location>
    <ligand>
        <name>Mn(2+)</name>
        <dbReference type="ChEBI" id="CHEBI:29035"/>
        <label>2</label>
    </ligand>
</feature>
<feature type="binding site" evidence="1">
    <location>
        <position position="238"/>
    </location>
    <ligand>
        <name>Mn(2+)</name>
        <dbReference type="ChEBI" id="CHEBI:29035"/>
        <label>2</label>
    </ligand>
</feature>
<feature type="sequence conflict" description="In Ref. 1; AAD51079." evidence="2" ref="1">
    <original>P</original>
    <variation>T</variation>
    <location>
        <position position="299"/>
    </location>
</feature>
<evidence type="ECO:0000250" key="1"/>
<evidence type="ECO:0000305" key="2"/>
<accession>Q9U9A3</accession>
<accession>Q559Q6</accession>
<accession>Q75JR8</accession>
<dbReference type="EC" id="3.1.3.16"/>
<dbReference type="EMBL" id="AF176121">
    <property type="protein sequence ID" value="AAD51079.1"/>
    <property type="molecule type" value="mRNA"/>
</dbReference>
<dbReference type="EMBL" id="AAFI02000008">
    <property type="protein sequence ID" value="EAL71211.1"/>
    <property type="molecule type" value="Genomic_DNA"/>
</dbReference>
<dbReference type="RefSeq" id="XP_645278.1">
    <property type="nucleotide sequence ID" value="XM_640186.1"/>
</dbReference>
<dbReference type="SMR" id="Q9U9A3"/>
<dbReference type="FunCoup" id="Q9U9A3">
    <property type="interactions" value="892"/>
</dbReference>
<dbReference type="STRING" id="44689.Q9U9A3"/>
<dbReference type="PaxDb" id="44689-DDB0185210"/>
<dbReference type="EnsemblProtists" id="EAL71211">
    <property type="protein sequence ID" value="EAL71211"/>
    <property type="gene ID" value="DDB_G0272118"/>
</dbReference>
<dbReference type="GeneID" id="8618444"/>
<dbReference type="KEGG" id="ddi:DDB_G0272118"/>
<dbReference type="dictyBase" id="DDB_G0272118">
    <property type="gene designation" value="ppp6c"/>
</dbReference>
<dbReference type="VEuPathDB" id="AmoebaDB:DDB_G0272118"/>
<dbReference type="eggNOG" id="KOG0373">
    <property type="taxonomic scope" value="Eukaryota"/>
</dbReference>
<dbReference type="HOGENOM" id="CLU_004962_8_1_1"/>
<dbReference type="InParanoid" id="Q9U9A3"/>
<dbReference type="OMA" id="MCLKVKY"/>
<dbReference type="PhylomeDB" id="Q9U9A3"/>
<dbReference type="Reactome" id="R-DDI-204005">
    <property type="pathway name" value="COPII-mediated vesicle transport"/>
</dbReference>
<dbReference type="PRO" id="PR:Q9U9A3"/>
<dbReference type="Proteomes" id="UP000002195">
    <property type="component" value="Chromosome 2"/>
</dbReference>
<dbReference type="GO" id="GO:0005737">
    <property type="term" value="C:cytoplasm"/>
    <property type="evidence" value="ECO:0000318"/>
    <property type="project" value="GO_Central"/>
</dbReference>
<dbReference type="GO" id="GO:0046872">
    <property type="term" value="F:metal ion binding"/>
    <property type="evidence" value="ECO:0007669"/>
    <property type="project" value="UniProtKB-KW"/>
</dbReference>
<dbReference type="GO" id="GO:0004722">
    <property type="term" value="F:protein serine/threonine phosphatase activity"/>
    <property type="evidence" value="ECO:0000318"/>
    <property type="project" value="GO_Central"/>
</dbReference>
<dbReference type="GO" id="GO:0000082">
    <property type="term" value="P:G1/S transition of mitotic cell cycle"/>
    <property type="evidence" value="ECO:0000318"/>
    <property type="project" value="GO_Central"/>
</dbReference>
<dbReference type="CDD" id="cd07415">
    <property type="entry name" value="MPP_PP2A_PP4_PP6"/>
    <property type="match status" value="1"/>
</dbReference>
<dbReference type="FunFam" id="3.60.21.10:FF:000005">
    <property type="entry name" value="Serine/threonine-protein phosphatase"/>
    <property type="match status" value="1"/>
</dbReference>
<dbReference type="Gene3D" id="3.60.21.10">
    <property type="match status" value="1"/>
</dbReference>
<dbReference type="InterPro" id="IPR004843">
    <property type="entry name" value="Calcineurin-like_PHP_ApaH"/>
</dbReference>
<dbReference type="InterPro" id="IPR029052">
    <property type="entry name" value="Metallo-depent_PP-like"/>
</dbReference>
<dbReference type="InterPro" id="IPR047129">
    <property type="entry name" value="PPA2-like"/>
</dbReference>
<dbReference type="InterPro" id="IPR006186">
    <property type="entry name" value="Ser/Thr-sp_prot-phosphatase"/>
</dbReference>
<dbReference type="PANTHER" id="PTHR45619">
    <property type="entry name" value="SERINE/THREONINE-PROTEIN PHOSPHATASE PP2A-RELATED"/>
    <property type="match status" value="1"/>
</dbReference>
<dbReference type="Pfam" id="PF00149">
    <property type="entry name" value="Metallophos"/>
    <property type="match status" value="1"/>
</dbReference>
<dbReference type="PRINTS" id="PR00114">
    <property type="entry name" value="STPHPHTASE"/>
</dbReference>
<dbReference type="SMART" id="SM00156">
    <property type="entry name" value="PP2Ac"/>
    <property type="match status" value="1"/>
</dbReference>
<dbReference type="SUPFAM" id="SSF56300">
    <property type="entry name" value="Metallo-dependent phosphatases"/>
    <property type="match status" value="1"/>
</dbReference>
<dbReference type="PROSITE" id="PS00125">
    <property type="entry name" value="SER_THR_PHOSPHATASE"/>
    <property type="match status" value="1"/>
</dbReference>
<sequence length="305" mass="35294">MSNALPLDEWVETARQCKYLPENDLKKLCERVKELLLEESNVQPVRSPVTICGDIHGQFYDLLELFKTGGEVPDTNYVFMGDFVDRGYYSLETFTYLLALKARYPDKITLLRGNHESRQITQVYGFYDECQQKYGNVNAWKYCTSVFDFLTLAAIIDGKVLCVHGGLSPKVRTLDQIRIISRNLEIPHEGPFCDLMWSDPEDIEQWQPSPRGAGWLFGSKVTAEFEHINGLNLICRAHQLVQEGYRYMFDNSLVTVWSAPNYCYRCGNVASILSLNENLDRDFKIFQAVQEERNIPTRPTMQYFF</sequence>
<reference key="1">
    <citation type="submission" date="1999-08" db="EMBL/GenBank/DDBJ databases">
        <title>Functional analysis of Dictyostelium discoideum PP6.</title>
        <authorList>
            <person name="Fiorini L.C."/>
            <person name="da Silva A.M."/>
        </authorList>
    </citation>
    <scope>NUCLEOTIDE SEQUENCE [MRNA]</scope>
    <source>
        <strain>AX4</strain>
    </source>
</reference>
<reference key="2">
    <citation type="journal article" date="2002" name="Nature">
        <title>Sequence and analysis of chromosome 2 of Dictyostelium discoideum.</title>
        <authorList>
            <person name="Gloeckner G."/>
            <person name="Eichinger L."/>
            <person name="Szafranski K."/>
            <person name="Pachebat J.A."/>
            <person name="Bankier A.T."/>
            <person name="Dear P.H."/>
            <person name="Lehmann R."/>
            <person name="Baumgart C."/>
            <person name="Parra G."/>
            <person name="Abril J.F."/>
            <person name="Guigo R."/>
            <person name="Kumpf K."/>
            <person name="Tunggal B."/>
            <person name="Cox E.C."/>
            <person name="Quail M.A."/>
            <person name="Platzer M."/>
            <person name="Rosenthal A."/>
            <person name="Noegel A.A."/>
        </authorList>
    </citation>
    <scope>NUCLEOTIDE SEQUENCE [LARGE SCALE GENOMIC DNA]</scope>
    <source>
        <strain>AX4</strain>
    </source>
</reference>
<reference key="3">
    <citation type="journal article" date="2005" name="Nature">
        <title>The genome of the social amoeba Dictyostelium discoideum.</title>
        <authorList>
            <person name="Eichinger L."/>
            <person name="Pachebat J.A."/>
            <person name="Gloeckner G."/>
            <person name="Rajandream M.A."/>
            <person name="Sucgang R."/>
            <person name="Berriman M."/>
            <person name="Song J."/>
            <person name="Olsen R."/>
            <person name="Szafranski K."/>
            <person name="Xu Q."/>
            <person name="Tunggal B."/>
            <person name="Kummerfeld S."/>
            <person name="Madera M."/>
            <person name="Konfortov B.A."/>
            <person name="Rivero F."/>
            <person name="Bankier A.T."/>
            <person name="Lehmann R."/>
            <person name="Hamlin N."/>
            <person name="Davies R."/>
            <person name="Gaudet P."/>
            <person name="Fey P."/>
            <person name="Pilcher K."/>
            <person name="Chen G."/>
            <person name="Saunders D."/>
            <person name="Sodergren E.J."/>
            <person name="Davis P."/>
            <person name="Kerhornou A."/>
            <person name="Nie X."/>
            <person name="Hall N."/>
            <person name="Anjard C."/>
            <person name="Hemphill L."/>
            <person name="Bason N."/>
            <person name="Farbrother P."/>
            <person name="Desany B."/>
            <person name="Just E."/>
            <person name="Morio T."/>
            <person name="Rost R."/>
            <person name="Churcher C.M."/>
            <person name="Cooper J."/>
            <person name="Haydock S."/>
            <person name="van Driessche N."/>
            <person name="Cronin A."/>
            <person name="Goodhead I."/>
            <person name="Muzny D.M."/>
            <person name="Mourier T."/>
            <person name="Pain A."/>
            <person name="Lu M."/>
            <person name="Harper D."/>
            <person name="Lindsay R."/>
            <person name="Hauser H."/>
            <person name="James K.D."/>
            <person name="Quiles M."/>
            <person name="Madan Babu M."/>
            <person name="Saito T."/>
            <person name="Buchrieser C."/>
            <person name="Wardroper A."/>
            <person name="Felder M."/>
            <person name="Thangavelu M."/>
            <person name="Johnson D."/>
            <person name="Knights A."/>
            <person name="Loulseged H."/>
            <person name="Mungall K.L."/>
            <person name="Oliver K."/>
            <person name="Price C."/>
            <person name="Quail M.A."/>
            <person name="Urushihara H."/>
            <person name="Hernandez J."/>
            <person name="Rabbinowitsch E."/>
            <person name="Steffen D."/>
            <person name="Sanders M."/>
            <person name="Ma J."/>
            <person name="Kohara Y."/>
            <person name="Sharp S."/>
            <person name="Simmonds M.N."/>
            <person name="Spiegler S."/>
            <person name="Tivey A."/>
            <person name="Sugano S."/>
            <person name="White B."/>
            <person name="Walker D."/>
            <person name="Woodward J.R."/>
            <person name="Winckler T."/>
            <person name="Tanaka Y."/>
            <person name="Shaulsky G."/>
            <person name="Schleicher M."/>
            <person name="Weinstock G.M."/>
            <person name="Rosenthal A."/>
            <person name="Cox E.C."/>
            <person name="Chisholm R.L."/>
            <person name="Gibbs R.A."/>
            <person name="Loomis W.F."/>
            <person name="Platzer M."/>
            <person name="Kay R.R."/>
            <person name="Williams J.G."/>
            <person name="Dear P.H."/>
            <person name="Noegel A.A."/>
            <person name="Barrell B.G."/>
            <person name="Kuspa A."/>
        </authorList>
    </citation>
    <scope>NUCLEOTIDE SEQUENCE [LARGE SCALE GENOMIC DNA]</scope>
    <source>
        <strain>AX4</strain>
    </source>
</reference>
<gene>
    <name type="primary">ppp6c</name>
    <name type="synonym">pppD</name>
    <name type="ORF">DDB_G0272118</name>
</gene>
<organism>
    <name type="scientific">Dictyostelium discoideum</name>
    <name type="common">Social amoeba</name>
    <dbReference type="NCBI Taxonomy" id="44689"/>
    <lineage>
        <taxon>Eukaryota</taxon>
        <taxon>Amoebozoa</taxon>
        <taxon>Evosea</taxon>
        <taxon>Eumycetozoa</taxon>
        <taxon>Dictyostelia</taxon>
        <taxon>Dictyosteliales</taxon>
        <taxon>Dictyosteliaceae</taxon>
        <taxon>Dictyostelium</taxon>
    </lineage>
</organism>
<protein>
    <recommendedName>
        <fullName>Serine/threonine-protein phosphatase 6 catalytic subunit</fullName>
        <shortName>PP6C</shortName>
        <ecNumber>3.1.3.16</ecNumber>
    </recommendedName>
</protein>
<name>PPP6_DICDI</name>
<keyword id="KW-0378">Hydrolase</keyword>
<keyword id="KW-0464">Manganese</keyword>
<keyword id="KW-0479">Metal-binding</keyword>
<keyword id="KW-0904">Protein phosphatase</keyword>
<keyword id="KW-1185">Reference proteome</keyword>
<proteinExistence type="evidence at transcript level"/>
<comment type="catalytic activity">
    <reaction>
        <text>O-phospho-L-seryl-[protein] + H2O = L-seryl-[protein] + phosphate</text>
        <dbReference type="Rhea" id="RHEA:20629"/>
        <dbReference type="Rhea" id="RHEA-COMP:9863"/>
        <dbReference type="Rhea" id="RHEA-COMP:11604"/>
        <dbReference type="ChEBI" id="CHEBI:15377"/>
        <dbReference type="ChEBI" id="CHEBI:29999"/>
        <dbReference type="ChEBI" id="CHEBI:43474"/>
        <dbReference type="ChEBI" id="CHEBI:83421"/>
        <dbReference type="EC" id="3.1.3.16"/>
    </reaction>
</comment>
<comment type="catalytic activity">
    <reaction>
        <text>O-phospho-L-threonyl-[protein] + H2O = L-threonyl-[protein] + phosphate</text>
        <dbReference type="Rhea" id="RHEA:47004"/>
        <dbReference type="Rhea" id="RHEA-COMP:11060"/>
        <dbReference type="Rhea" id="RHEA-COMP:11605"/>
        <dbReference type="ChEBI" id="CHEBI:15377"/>
        <dbReference type="ChEBI" id="CHEBI:30013"/>
        <dbReference type="ChEBI" id="CHEBI:43474"/>
        <dbReference type="ChEBI" id="CHEBI:61977"/>
        <dbReference type="EC" id="3.1.3.16"/>
    </reaction>
</comment>
<comment type="cofactor">
    <cofactor evidence="1">
        <name>Mn(2+)</name>
        <dbReference type="ChEBI" id="CHEBI:29035"/>
    </cofactor>
    <text evidence="1">Binds 2 manganese ions per subunit.</text>
</comment>
<comment type="similarity">
    <text evidence="2">Belongs to the PPP phosphatase family. PP-6 (PP-V) subfamily.</text>
</comment>